<dbReference type="EMBL" id="AF222339">
    <property type="protein sequence ID" value="AAK31811.1"/>
    <property type="molecule type" value="mRNA"/>
</dbReference>
<dbReference type="RefSeq" id="NP_001082096.1">
    <property type="nucleotide sequence ID" value="NM_001088627.1"/>
</dbReference>
<dbReference type="SMR" id="Q98TA5"/>
<dbReference type="IntAct" id="Q98TA5">
    <property type="interactions" value="1"/>
</dbReference>
<dbReference type="MINT" id="Q98TA5"/>
<dbReference type="GeneID" id="398222"/>
<dbReference type="KEGG" id="xla:398222"/>
<dbReference type="AGR" id="Xenbase:XB-GENE-17342845"/>
<dbReference type="CTD" id="398222"/>
<dbReference type="Xenbase" id="XB-GENE-17342845">
    <property type="gene designation" value="chaf1a.L"/>
</dbReference>
<dbReference type="OrthoDB" id="79480at2759"/>
<dbReference type="Proteomes" id="UP000186698">
    <property type="component" value="Chromosome 1L"/>
</dbReference>
<dbReference type="Bgee" id="398222">
    <property type="expression patterns" value="Expressed in blastula and 19 other cell types or tissues"/>
</dbReference>
<dbReference type="GO" id="GO:0033186">
    <property type="term" value="C:CAF-1 complex"/>
    <property type="evidence" value="ECO:0000250"/>
    <property type="project" value="UniProtKB"/>
</dbReference>
<dbReference type="GO" id="GO:0005634">
    <property type="term" value="C:nucleus"/>
    <property type="evidence" value="ECO:0000318"/>
    <property type="project" value="GO_Central"/>
</dbReference>
<dbReference type="GO" id="GO:0006281">
    <property type="term" value="P:DNA repair"/>
    <property type="evidence" value="ECO:0007669"/>
    <property type="project" value="UniProtKB-KW"/>
</dbReference>
<dbReference type="GO" id="GO:0006260">
    <property type="term" value="P:DNA replication"/>
    <property type="evidence" value="ECO:0007669"/>
    <property type="project" value="UniProtKB-KW"/>
</dbReference>
<dbReference type="GO" id="GO:0006335">
    <property type="term" value="P:DNA replication-dependent chromatin assembly"/>
    <property type="evidence" value="ECO:0000250"/>
    <property type="project" value="UniProtKB"/>
</dbReference>
<dbReference type="GO" id="GO:0006334">
    <property type="term" value="P:nucleosome assembly"/>
    <property type="evidence" value="ECO:0000315"/>
    <property type="project" value="GO_Central"/>
</dbReference>
<dbReference type="InterPro" id="IPR021644">
    <property type="entry name" value="CAF-1_p150_acidic"/>
</dbReference>
<dbReference type="InterPro" id="IPR029105">
    <property type="entry name" value="CAF1-p150_C2"/>
</dbReference>
<dbReference type="InterPro" id="IPR029091">
    <property type="entry name" value="CAF1_p150_N"/>
</dbReference>
<dbReference type="InterPro" id="IPR022043">
    <property type="entry name" value="CAF1A_DD"/>
</dbReference>
<dbReference type="PANTHER" id="PTHR15272:SF0">
    <property type="entry name" value="CHROMATIN ASSEMBLY FACTOR 1 SUBUNIT A"/>
    <property type="match status" value="1"/>
</dbReference>
<dbReference type="PANTHER" id="PTHR15272">
    <property type="entry name" value="CHROMATIN ASSEMBLY FACTOR 1 SUBUNIT A CAF-1 SUBUNIT A"/>
    <property type="match status" value="1"/>
</dbReference>
<dbReference type="Pfam" id="PF15539">
    <property type="entry name" value="CAF1-p150_C2"/>
    <property type="match status" value="1"/>
</dbReference>
<dbReference type="Pfam" id="PF15557">
    <property type="entry name" value="CAF1-p150_N"/>
    <property type="match status" value="1"/>
</dbReference>
<dbReference type="Pfam" id="PF11600">
    <property type="entry name" value="CAF1A_acidic"/>
    <property type="match status" value="1"/>
</dbReference>
<dbReference type="Pfam" id="PF12253">
    <property type="entry name" value="CAF1A_dimeriz"/>
    <property type="match status" value="1"/>
</dbReference>
<keyword id="KW-0131">Cell cycle</keyword>
<keyword id="KW-0143">Chaperone</keyword>
<keyword id="KW-0227">DNA damage</keyword>
<keyword id="KW-0234">DNA repair</keyword>
<keyword id="KW-0235">DNA replication</keyword>
<keyword id="KW-0539">Nucleus</keyword>
<keyword id="KW-1185">Reference proteome</keyword>
<name>CA1AA_XENLA</name>
<evidence type="ECO:0000250" key="1"/>
<evidence type="ECO:0000256" key="2">
    <source>
        <dbReference type="SAM" id="MobiDB-lite"/>
    </source>
</evidence>
<evidence type="ECO:0000269" key="3">
    <source>
    </source>
</evidence>
<evidence type="ECO:0000305" key="4"/>
<accession>Q98TA5</accession>
<proteinExistence type="evidence at protein level"/>
<protein>
    <recommendedName>
        <fullName>Chromatin assembly factor 1 subunit A-A</fullName>
        <shortName>CAF-1 subunit A</shortName>
    </recommendedName>
    <alternativeName>
        <fullName>Chromatin assembly factor I p150 subunit A</fullName>
        <shortName>CAF-I 150 kDa subunit A</shortName>
        <shortName>CAF-I p150-A</shortName>
        <shortName>xp150</shortName>
    </alternativeName>
</protein>
<reference key="1">
    <citation type="journal article" date="2001" name="EMBO J.">
        <title>Dimerization of the largest subunit of chromatin assembly factor 1: importance in vitro and during Xenopus early development.</title>
        <authorList>
            <person name="Quivy J.-P."/>
            <person name="Grandi P."/>
            <person name="Almouzni G."/>
        </authorList>
    </citation>
    <scope>NUCLEOTIDE SEQUENCE [MRNA]</scope>
    <scope>FUNCTION</scope>
    <scope>HOMODIMER</scope>
    <scope>SUBCELLULAR LOCATION</scope>
</reference>
<gene>
    <name type="primary">chaf1a-a</name>
    <name type="synonym">caip150</name>
</gene>
<sequence>MPGKEAAVNVMQSSTKSNTKKMVQARLPFKRLNPVPKDEGCLEEKKVRITKNVSPQKMLHSLNSSMEDMENDCDMETETVPIPKAVNGKGPLDNYIRKAPKVSHAPSITTIDLTEESNISISNDCPLNGESETHLANGTLALEESTPNLPLSAKEECTVSLENKTVENTHFSELKSDQLHQAAATSTSASNFSPERVVKEDCNSSADDDSASVSSSSSPVSLSSPDAQTGSQFRNRSSPSTSTTPTGKVTANKTSADKNKTKDKDKQRQAEKEERERAKKEARSAKKKKRQGLLKNLQRKRGKTSESSGKEYKKEKKEREDKEKAEKMKLKEEKKREKLEALEAKQEEKRKKDEEKRQKEEEKRQKEEEKRLKEEEKRVKAEKAEITRFFQKPKTPQAPKTFSRSCGKFAPFEIKKGMALAPLCRIDFEPEASEELDRFLQEQNSKIYFFDEIKKRKPRKMGQTTVPTVNSFEVDDVQVLGESDPVLGSNMLEGHIKDIGVPERKKFGRMKLLQFCENHRPAYWGTCNRRSRVINSRKPWAQDTGMLDYEVDSDEEWEEEEPGESLSHSEGENDDDPKEDDEDDDGFFVPHGYLSDDEGVSDEECTDPENQKFRQKLKAKEWYELQTNGKKIRAMQPVVIGCVWWDSKASEISLLQKFSACILESPAVDEELAQEISSAQSLKDRQILSKLVPLLHGNVNGSKIMIQEFQEYCRRGLFLEDNASDAAGNESTSPNVTPQTPSNIIVPSKARLKRLISENSVYEKRPDHRMCWYVHSDVLKGLQQDNLPVPCQWTYITQVNSVAKEDNGANGGSLQSLPLSGKRKSAGSMPITKFMKRAKDLETAINTDMDGFQADNEEDDDDCMILEDQQAKDAEDSTIECKINLNDSAVLASCQN</sequence>
<organism>
    <name type="scientific">Xenopus laevis</name>
    <name type="common">African clawed frog</name>
    <dbReference type="NCBI Taxonomy" id="8355"/>
    <lineage>
        <taxon>Eukaryota</taxon>
        <taxon>Metazoa</taxon>
        <taxon>Chordata</taxon>
        <taxon>Craniata</taxon>
        <taxon>Vertebrata</taxon>
        <taxon>Euteleostomi</taxon>
        <taxon>Amphibia</taxon>
        <taxon>Batrachia</taxon>
        <taxon>Anura</taxon>
        <taxon>Pipoidea</taxon>
        <taxon>Pipidae</taxon>
        <taxon>Xenopodinae</taxon>
        <taxon>Xenopus</taxon>
        <taxon>Xenopus</taxon>
    </lineage>
</organism>
<feature type="chain" id="PRO_0000373884" description="Chromatin assembly factor 1 subunit A-A">
    <location>
        <begin position="1"/>
        <end position="896"/>
    </location>
</feature>
<feature type="region of interest" description="Disordered" evidence="2">
    <location>
        <begin position="1"/>
        <end position="23"/>
    </location>
</feature>
<feature type="region of interest" description="Disordered" evidence="2">
    <location>
        <begin position="185"/>
        <end position="377"/>
    </location>
</feature>
<feature type="region of interest" description="Disordered" evidence="2">
    <location>
        <begin position="552"/>
        <end position="610"/>
    </location>
</feature>
<feature type="region of interest" description="Necessary for homodimerization, competence for chromatin assembly">
    <location>
        <begin position="642"/>
        <end position="678"/>
    </location>
</feature>
<feature type="region of interest" description="Disordered" evidence="2">
    <location>
        <begin position="724"/>
        <end position="743"/>
    </location>
</feature>
<feature type="compositionally biased region" description="Polar residues" evidence="2">
    <location>
        <begin position="10"/>
        <end position="21"/>
    </location>
</feature>
<feature type="compositionally biased region" description="Low complexity" evidence="2">
    <location>
        <begin position="211"/>
        <end position="226"/>
    </location>
</feature>
<feature type="compositionally biased region" description="Polar residues" evidence="2">
    <location>
        <begin position="227"/>
        <end position="236"/>
    </location>
</feature>
<feature type="compositionally biased region" description="Low complexity" evidence="2">
    <location>
        <begin position="237"/>
        <end position="246"/>
    </location>
</feature>
<feature type="compositionally biased region" description="Basic and acidic residues" evidence="2">
    <location>
        <begin position="255"/>
        <end position="284"/>
    </location>
</feature>
<feature type="compositionally biased region" description="Basic residues" evidence="2">
    <location>
        <begin position="285"/>
        <end position="302"/>
    </location>
</feature>
<feature type="compositionally biased region" description="Basic and acidic residues" evidence="2">
    <location>
        <begin position="308"/>
        <end position="377"/>
    </location>
</feature>
<feature type="compositionally biased region" description="Acidic residues" evidence="2">
    <location>
        <begin position="552"/>
        <end position="563"/>
    </location>
</feature>
<feature type="compositionally biased region" description="Acidic residues" evidence="2">
    <location>
        <begin position="572"/>
        <end position="586"/>
    </location>
</feature>
<feature type="compositionally biased region" description="Acidic residues" evidence="2">
    <location>
        <begin position="595"/>
        <end position="607"/>
    </location>
</feature>
<feature type="compositionally biased region" description="Polar residues" evidence="2">
    <location>
        <begin position="729"/>
        <end position="743"/>
    </location>
</feature>
<comment type="function">
    <text evidence="1 3">Involved in chromatin assembly in DNA replication and DNA repair.</text>
</comment>
<comment type="subunit">
    <text evidence="1">Homodimer.</text>
</comment>
<comment type="interaction">
    <interactant intactId="EBI-8563970">
        <id>Q98TA5</id>
    </interactant>
    <interactant intactId="EBI-8563988">
        <id>Q7ZZH7</id>
        <label>dbf4</label>
    </interactant>
    <organismsDiffer>false</organismsDiffer>
    <experiments>2</experiments>
</comment>
<comment type="subcellular location">
    <subcellularLocation>
        <location evidence="3">Nucleus</location>
    </subcellularLocation>
</comment>
<comment type="similarity">
    <text evidence="4">Belongs to the CHAF1A family.</text>
</comment>